<accession>Q9I596</accession>
<accession>Q7AY51</accession>
<accession>Q9RHQ0</accession>
<feature type="signal peptide" evidence="2">
    <location>
        <begin position="1"/>
        <end position="24"/>
    </location>
</feature>
<feature type="chain" id="PRO_0000247111" description="Neutral ceramidase">
    <location>
        <begin position="25"/>
        <end position="670"/>
    </location>
</feature>
<feature type="region of interest" description="Required for correct folding and localization">
    <location>
        <begin position="644"/>
        <end position="670"/>
    </location>
</feature>
<feature type="active site" description="Nucleophile" evidence="1">
    <location>
        <position position="274"/>
    </location>
</feature>
<feature type="binding site" evidence="6 12 13">
    <location>
        <position position="61"/>
    </location>
    <ligand>
        <name>Mg(2+)</name>
        <dbReference type="ChEBI" id="CHEBI:18420"/>
    </ligand>
</feature>
<feature type="binding site" evidence="11">
    <location>
        <position position="84"/>
    </location>
    <ligand>
        <name>substrate</name>
    </ligand>
</feature>
<feature type="binding site" evidence="11">
    <location>
        <position position="92"/>
    </location>
    <ligand>
        <name>substrate</name>
    </ligand>
</feature>
<feature type="binding site" evidence="11">
    <location>
        <position position="111"/>
    </location>
    <ligand>
        <name>substrate</name>
    </ligand>
</feature>
<feature type="binding site" evidence="6 12 13">
    <location>
        <position position="121"/>
    </location>
    <ligand>
        <name>Zn(2+)</name>
        <dbReference type="ChEBI" id="CHEBI:29105"/>
    </ligand>
</feature>
<feature type="binding site" evidence="11">
    <location>
        <position position="130"/>
    </location>
    <ligand>
        <name>substrate</name>
    </ligand>
</feature>
<feature type="binding site" evidence="6 12 13">
    <location>
        <position position="228"/>
    </location>
    <ligand>
        <name>Zn(2+)</name>
        <dbReference type="ChEBI" id="CHEBI:29105"/>
    </ligand>
</feature>
<feature type="binding site" evidence="6 12 13">
    <location>
        <position position="435"/>
    </location>
    <ligand>
        <name>Zn(2+)</name>
        <dbReference type="ChEBI" id="CHEBI:29105"/>
    </ligand>
</feature>
<feature type="binding site" evidence="11">
    <location>
        <position position="469"/>
    </location>
    <ligand>
        <name>substrate</name>
    </ligand>
</feature>
<feature type="binding site" evidence="6 12 13">
    <location>
        <position position="472"/>
    </location>
    <ligand>
        <name>Zn(2+)</name>
        <dbReference type="ChEBI" id="CHEBI:29105"/>
    </ligand>
</feature>
<feature type="binding site" evidence="6 12 13">
    <location>
        <position position="603"/>
    </location>
    <ligand>
        <name>Mg(2+)</name>
        <dbReference type="ChEBI" id="CHEBI:18420"/>
    </ligand>
</feature>
<feature type="binding site" evidence="6 12 13">
    <location>
        <position position="605"/>
    </location>
    <ligand>
        <name>Mg(2+)</name>
        <dbReference type="ChEBI" id="CHEBI:18420"/>
    </ligand>
</feature>
<feature type="binding site" evidence="6 12 13">
    <location>
        <position position="608"/>
    </location>
    <ligand>
        <name>Mg(2+)</name>
        <dbReference type="ChEBI" id="CHEBI:18420"/>
    </ligand>
</feature>
<feature type="disulfide bond" evidence="11">
    <location>
        <begin position="346"/>
        <end position="394"/>
    </location>
</feature>
<feature type="mutagenesis site" description="No ceramidase activity; when associated with A-123." evidence="6">
    <original>H</original>
    <variation>A</variation>
    <location>
        <position position="121"/>
    </location>
</feature>
<feature type="mutagenesis site" description="No ceramidase activity; when associated with A-121." evidence="6">
    <original>H</original>
    <variation>A</variation>
    <location>
        <position position="123"/>
    </location>
</feature>
<feature type="mutagenesis site" description="No ceramidase activity; when associated." evidence="6">
    <original>R</original>
    <variation>A</variation>
    <location>
        <position position="184"/>
    </location>
</feature>
<feature type="mutagenesis site" description="Slight ceramidase activity." evidence="6">
    <original>E</original>
    <variation>A</variation>
    <location>
        <position position="435"/>
    </location>
</feature>
<feature type="mutagenesis site" description="No ceramidase activity; when associated." evidence="6">
    <original>Y</original>
    <variation>A</variation>
    <location>
        <position position="472"/>
    </location>
</feature>
<feature type="mutagenesis site" description="Slight ceramidase activity." evidence="6">
    <original>Y</original>
    <variation>A</variation>
    <location>
        <position position="484"/>
    </location>
</feature>
<feature type="mutagenesis site" description="Abolishes enzyme activity." evidence="5">
    <original>V</original>
    <variation>D</variation>
    <location>
        <position position="665"/>
    </location>
</feature>
<feature type="sequence conflict" description="In Ref. 1; BAA88409." evidence="8" ref="1">
    <original>I</original>
    <variation>T</variation>
    <location>
        <position position="90"/>
    </location>
</feature>
<feature type="sequence conflict" description="In Ref. 1; BAA88409." evidence="8" ref="1">
    <original>N</original>
    <variation>S</variation>
    <location>
        <position position="181"/>
    </location>
</feature>
<feature type="sequence conflict" description="In Ref. 1; BAA88409." evidence="8" ref="1">
    <original>V</original>
    <variation>A</variation>
    <location>
        <position position="196"/>
    </location>
</feature>
<feature type="sequence conflict" description="In Ref. 1; BAA88409." evidence="8" ref="1">
    <original>E</original>
    <variation>V</variation>
    <location>
        <position position="598"/>
    </location>
</feature>
<feature type="strand" evidence="14">
    <location>
        <begin position="28"/>
        <end position="37"/>
    </location>
</feature>
<feature type="strand" evidence="14">
    <location>
        <begin position="43"/>
        <end position="50"/>
    </location>
</feature>
<feature type="strand" evidence="14">
    <location>
        <begin position="56"/>
        <end position="62"/>
    </location>
</feature>
<feature type="strand" evidence="14">
    <location>
        <begin position="65"/>
        <end position="76"/>
    </location>
</feature>
<feature type="strand" evidence="14">
    <location>
        <begin position="79"/>
        <end position="88"/>
    </location>
</feature>
<feature type="helix" evidence="14">
    <location>
        <begin position="92"/>
        <end position="105"/>
    </location>
</feature>
<feature type="turn" evidence="14">
    <location>
        <begin position="107"/>
        <end position="109"/>
    </location>
</feature>
<feature type="turn" evidence="14">
    <location>
        <begin position="112"/>
        <end position="114"/>
    </location>
</feature>
<feature type="strand" evidence="14">
    <location>
        <begin position="115"/>
        <end position="119"/>
    </location>
</feature>
<feature type="strand" evidence="14">
    <location>
        <begin position="122"/>
        <end position="126"/>
    </location>
</feature>
<feature type="helix" evidence="14">
    <location>
        <begin position="133"/>
        <end position="136"/>
    </location>
</feature>
<feature type="helix" evidence="14">
    <location>
        <begin position="137"/>
        <end position="139"/>
    </location>
</feature>
<feature type="helix" evidence="14">
    <location>
        <begin position="144"/>
        <end position="162"/>
    </location>
</feature>
<feature type="strand" evidence="14">
    <location>
        <begin position="166"/>
        <end position="176"/>
    </location>
</feature>
<feature type="strand" evidence="14">
    <location>
        <begin position="179"/>
        <end position="184"/>
    </location>
</feature>
<feature type="helix" evidence="14">
    <location>
        <begin position="186"/>
        <end position="189"/>
    </location>
</feature>
<feature type="strand" evidence="14">
    <location>
        <begin position="205"/>
        <end position="213"/>
    </location>
</feature>
<feature type="strand" evidence="14">
    <location>
        <begin position="218"/>
        <end position="224"/>
    </location>
</feature>
<feature type="strand" evidence="14">
    <location>
        <begin position="238"/>
        <end position="240"/>
    </location>
</feature>
<feature type="helix" evidence="14">
    <location>
        <begin position="242"/>
        <end position="253"/>
    </location>
</feature>
<feature type="strand" evidence="15">
    <location>
        <begin position="258"/>
        <end position="260"/>
    </location>
</feature>
<feature type="strand" evidence="14">
    <location>
        <begin position="262"/>
        <end position="266"/>
    </location>
</feature>
<feature type="strand" evidence="14">
    <location>
        <begin position="273"/>
        <end position="275"/>
    </location>
</feature>
<feature type="strand" evidence="15">
    <location>
        <begin position="277"/>
        <end position="281"/>
    </location>
</feature>
<feature type="strand" evidence="15">
    <location>
        <begin position="283"/>
        <end position="285"/>
    </location>
</feature>
<feature type="helix" evidence="14">
    <location>
        <begin position="289"/>
        <end position="310"/>
    </location>
</feature>
<feature type="strand" evidence="14">
    <location>
        <begin position="313"/>
        <end position="315"/>
    </location>
</feature>
<feature type="strand" evidence="14">
    <location>
        <begin position="319"/>
        <end position="327"/>
    </location>
</feature>
<feature type="helix" evidence="14">
    <location>
        <begin position="335"/>
        <end position="337"/>
    </location>
</feature>
<feature type="strand" evidence="14">
    <location>
        <begin position="338"/>
        <end position="341"/>
    </location>
</feature>
<feature type="strand" evidence="15">
    <location>
        <begin position="359"/>
        <end position="363"/>
    </location>
</feature>
<feature type="helix" evidence="14">
    <location>
        <begin position="374"/>
        <end position="378"/>
    </location>
</feature>
<feature type="helix" evidence="14">
    <location>
        <begin position="389"/>
        <end position="394"/>
    </location>
</feature>
<feature type="turn" evidence="14">
    <location>
        <begin position="395"/>
        <end position="397"/>
    </location>
</feature>
<feature type="strand" evidence="14">
    <location>
        <begin position="400"/>
        <end position="402"/>
    </location>
</feature>
<feature type="strand" evidence="14">
    <location>
        <begin position="408"/>
        <end position="410"/>
    </location>
</feature>
<feature type="strand" evidence="14">
    <location>
        <begin position="415"/>
        <end position="424"/>
    </location>
</feature>
<feature type="strand" evidence="14">
    <location>
        <begin position="427"/>
        <end position="431"/>
    </location>
</feature>
<feature type="strand" evidence="14">
    <location>
        <begin position="433"/>
        <end position="436"/>
    </location>
</feature>
<feature type="helix" evidence="14">
    <location>
        <begin position="438"/>
        <end position="452"/>
    </location>
</feature>
<feature type="helix" evidence="14">
    <location>
        <begin position="453"/>
        <end position="455"/>
    </location>
</feature>
<feature type="strand" evidence="14">
    <location>
        <begin position="459"/>
        <end position="463"/>
    </location>
</feature>
<feature type="strand" evidence="14">
    <location>
        <begin position="465"/>
        <end position="468"/>
    </location>
</feature>
<feature type="helix" evidence="14">
    <location>
        <begin position="476"/>
        <end position="481"/>
    </location>
</feature>
<feature type="turn" evidence="14">
    <location>
        <begin position="484"/>
        <end position="487"/>
    </location>
</feature>
<feature type="helix" evidence="14">
    <location>
        <begin position="495"/>
        <end position="512"/>
    </location>
</feature>
<feature type="helix" evidence="14">
    <location>
        <begin position="526"/>
        <end position="528"/>
    </location>
</feature>
<feature type="strand" evidence="14">
    <location>
        <begin position="550"/>
        <end position="552"/>
    </location>
</feature>
<feature type="strand" evidence="14">
    <location>
        <begin position="556"/>
        <end position="559"/>
    </location>
</feature>
<feature type="strand" evidence="14">
    <location>
        <begin position="563"/>
        <end position="569"/>
    </location>
</feature>
<feature type="helix" evidence="14">
    <location>
        <begin position="573"/>
        <end position="575"/>
    </location>
</feature>
<feature type="strand" evidence="14">
    <location>
        <begin position="583"/>
        <end position="593"/>
    </location>
</feature>
<feature type="strand" evidence="14">
    <location>
        <begin position="598"/>
        <end position="602"/>
    </location>
</feature>
<feature type="strand" evidence="14">
    <location>
        <begin position="608"/>
        <end position="615"/>
    </location>
</feature>
<feature type="turn" evidence="14">
    <location>
        <begin position="616"/>
        <end position="618"/>
    </location>
</feature>
<feature type="strand" evidence="14">
    <location>
        <begin position="619"/>
        <end position="627"/>
    </location>
</feature>
<feature type="strand" evidence="14">
    <location>
        <begin position="634"/>
        <end position="646"/>
    </location>
</feature>
<feature type="turn" evidence="14">
    <location>
        <begin position="648"/>
        <end position="650"/>
    </location>
</feature>
<feature type="strand" evidence="14">
    <location>
        <begin position="653"/>
        <end position="659"/>
    </location>
</feature>
<feature type="strand" evidence="14">
    <location>
        <begin position="663"/>
        <end position="666"/>
    </location>
</feature>
<sequence length="670" mass="73373">MSRSAFTALLLSCVLLALSMPARADDLPYRFGLGKADITGEAAEVGMMGYSSLEQKTAGIHMRQWARAFVIEEAASGRRLVYVNTDLGMIFQAVHLKVLARLKAKYPGVYDENNVMLAATHTHSGPGGFSHYAMYNLSVLGFQEKTFNAIVDGIVRSIERAQARLQPGRLFYGSGELRNANRNRSLLSHLKNPDIVGYEDGIDPQMSVLSFVDANGELAGAISWFPVHSTSMTNANHLISPDNKGYASYHWEHDVSRKSGFVAAFAQTNAGNLSPNLNLKPGSGPFDNEFDNTREIGLRQFAKAYEIAGQAQEEVLGELDSRFRFVDFTRLPIRPEFTDGQPRQLCTAAIGTSLAAGSTEDGPGPLGLEEGNNPFLSALGGLLTGVPPQELVQCQAEKTILADTGNKKPYPWTPTVLPIQMFRIGQLELLGAPAEFTVMAGVRIRRAVQAASEAAGIRHVVFNGYANAYASYVTTREEYAAQEYEGGSTLYGPWTQAAYQQLFVDMAVALRERLPVETSAIAPDLSCCQMNFQTGVVADDPYIGKSFGDVLQQPRESYRIGDKVTVAFVTGHPKNDLRTEKTFLEVVNIGKDGKQTPETVATDNDWDTQYRWERVGISASKATISWSIPPGTEPGHYYIRHYGNAKNFWTQKISEIGGSTRSFEVLGTTP</sequence>
<name>NCASE_PSEAE</name>
<evidence type="ECO:0000250" key="1"/>
<evidence type="ECO:0000269" key="2">
    <source>
    </source>
</evidence>
<evidence type="ECO:0000269" key="3">
    <source>
    </source>
</evidence>
<evidence type="ECO:0000269" key="4">
    <source>
    </source>
</evidence>
<evidence type="ECO:0000269" key="5">
    <source>
    </source>
</evidence>
<evidence type="ECO:0000269" key="6">
    <source>
    </source>
</evidence>
<evidence type="ECO:0000269" key="7">
    <source>
    </source>
</evidence>
<evidence type="ECO:0000305" key="8"/>
<evidence type="ECO:0000305" key="9">
    <source>
    </source>
</evidence>
<evidence type="ECO:0000305" key="10">
    <source>
    </source>
</evidence>
<evidence type="ECO:0000305" key="11">
    <source>
    </source>
</evidence>
<evidence type="ECO:0007744" key="12">
    <source>
        <dbReference type="PDB" id="2ZWS"/>
    </source>
</evidence>
<evidence type="ECO:0007744" key="13">
    <source>
        <dbReference type="PDB" id="2ZXC"/>
    </source>
</evidence>
<evidence type="ECO:0007829" key="14">
    <source>
        <dbReference type="PDB" id="2ZWS"/>
    </source>
</evidence>
<evidence type="ECO:0007829" key="15">
    <source>
        <dbReference type="PDB" id="2ZXC"/>
    </source>
</evidence>
<comment type="function">
    <text evidence="6 7">Catalyzes the cleavage of the N-acyl linkage of the ceramides (Cers) to yield sphingosine (Sph) and free fatty acid at an optimal pH of 8-9. Also catalyzes the synthesis of Cers from Sph and fatty acid.</text>
</comment>
<comment type="catalytic activity">
    <reaction evidence="2 4 7">
        <text>an N-acylsphing-4-enine + H2O = sphing-4-enine + a fatty acid</text>
        <dbReference type="Rhea" id="RHEA:20856"/>
        <dbReference type="ChEBI" id="CHEBI:15377"/>
        <dbReference type="ChEBI" id="CHEBI:28868"/>
        <dbReference type="ChEBI" id="CHEBI:52639"/>
        <dbReference type="ChEBI" id="CHEBI:57756"/>
        <dbReference type="EC" id="3.5.1.23"/>
    </reaction>
</comment>
<comment type="cofactor">
    <cofactor evidence="6">
        <name>Zn(2+)</name>
        <dbReference type="ChEBI" id="CHEBI:29105"/>
    </cofactor>
    <text evidence="6">Binds 1 zinc ion per subunit.</text>
</comment>
<comment type="cofactor">
    <cofactor evidence="6">
        <name>Mg(2+)</name>
        <dbReference type="ChEBI" id="CHEBI:18420"/>
    </cofactor>
</comment>
<comment type="activity regulation">
    <text evidence="3">Inhibited by EDTA, EGTA and D/L-sphinganine D-erythro-sphingosine. L-erythro-sphingosine is a less powerful inhibitor. Stimulated by glycerophospholipids: cardiolipin is the most effective, followed by phosphatidic acid, phosphatidylethanolamine and phosphatidylglycerol, whereas phosphatidylcholine, lysophosphatidic acid and diacylglycerol are less effective.</text>
</comment>
<comment type="biophysicochemical properties">
    <kinetics>
        <KM evidence="4 7">139 uM for N-palmitoylsphingosine</KM>
        <Vmax evidence="4 7">5.3 umol/min/mg enzyme with N-palmitoylsphingosine as substrate</Vmax>
    </kinetics>
    <phDependence>
        <text evidence="4 7">Optimum pH is 7.5-9.5.</text>
    </phDependence>
</comment>
<comment type="subunit">
    <text evidence="6">Homodimer.</text>
</comment>
<comment type="subcellular location">
    <subcellularLocation>
        <location evidence="8">Secreted</location>
    </subcellularLocation>
</comment>
<comment type="miscellaneous">
    <text evidence="9 10">Alternate N-termini have been proposed by different authors. It either starts from Asp-25 (PubMed:10593963) or from Leu-27 (PubMed:12821326).</text>
</comment>
<comment type="similarity">
    <text evidence="8">Belongs to the neutral ceramidase family.</text>
</comment>
<gene>
    <name type="ordered locus">PA0845</name>
</gene>
<dbReference type="EC" id="3.5.1.23"/>
<dbReference type="EMBL" id="AB028646">
    <property type="protein sequence ID" value="BAA88409.1"/>
    <property type="molecule type" value="Genomic_DNA"/>
</dbReference>
<dbReference type="EMBL" id="AJ315932">
    <property type="protein sequence ID" value="CAC67511.1"/>
    <property type="molecule type" value="Genomic_DNA"/>
</dbReference>
<dbReference type="EMBL" id="AE004091">
    <property type="protein sequence ID" value="AAG04234.1"/>
    <property type="molecule type" value="Genomic_DNA"/>
</dbReference>
<dbReference type="PIR" id="C83540">
    <property type="entry name" value="C83540"/>
</dbReference>
<dbReference type="RefSeq" id="NP_249536.1">
    <property type="nucleotide sequence ID" value="NC_002516.2"/>
</dbReference>
<dbReference type="PDB" id="2ZWS">
    <property type="method" value="X-ray"/>
    <property type="resolution" value="1.40 A"/>
    <property type="chains" value="A=25-670"/>
</dbReference>
<dbReference type="PDB" id="2ZXC">
    <property type="method" value="X-ray"/>
    <property type="resolution" value="2.20 A"/>
    <property type="chains" value="A/B=25-670"/>
</dbReference>
<dbReference type="PDBsum" id="2ZWS"/>
<dbReference type="PDBsum" id="2ZXC"/>
<dbReference type="SMR" id="Q9I596"/>
<dbReference type="STRING" id="208964.PA0845"/>
<dbReference type="DrugBank" id="DB06960">
    <property type="generic name" value="N-[(1R,2R,3E)-2-hydroxy-1-(hydroxymethyl)heptadec-3-en-1-yl]acetamide"/>
</dbReference>
<dbReference type="PaxDb" id="208964-PA0845"/>
<dbReference type="GeneID" id="880698"/>
<dbReference type="KEGG" id="pae:PA0845"/>
<dbReference type="PATRIC" id="fig|208964.12.peg.877"/>
<dbReference type="PseudoCAP" id="PA0845"/>
<dbReference type="HOGENOM" id="CLU_011300_2_0_6"/>
<dbReference type="InParanoid" id="Q9I596"/>
<dbReference type="OrthoDB" id="6899210at2"/>
<dbReference type="BioCyc" id="PAER208964:G1FZ6-860-MONOMER"/>
<dbReference type="BRENDA" id="3.5.1.23">
    <property type="organism ID" value="5087"/>
</dbReference>
<dbReference type="EvolutionaryTrace" id="Q9I596"/>
<dbReference type="Proteomes" id="UP000002438">
    <property type="component" value="Chromosome"/>
</dbReference>
<dbReference type="GO" id="GO:0005576">
    <property type="term" value="C:extracellular region"/>
    <property type="evidence" value="ECO:0000318"/>
    <property type="project" value="GO_Central"/>
</dbReference>
<dbReference type="GO" id="GO:0016020">
    <property type="term" value="C:membrane"/>
    <property type="evidence" value="ECO:0007669"/>
    <property type="project" value="GOC"/>
</dbReference>
<dbReference type="GO" id="GO:0046872">
    <property type="term" value="F:metal ion binding"/>
    <property type="evidence" value="ECO:0007669"/>
    <property type="project" value="UniProtKB-KW"/>
</dbReference>
<dbReference type="GO" id="GO:0017040">
    <property type="term" value="F:N-acylsphingosine amidohydrolase activity"/>
    <property type="evidence" value="ECO:0000314"/>
    <property type="project" value="UniProtKB"/>
</dbReference>
<dbReference type="GO" id="GO:0046514">
    <property type="term" value="P:ceramide catabolic process"/>
    <property type="evidence" value="ECO:0000318"/>
    <property type="project" value="GO_Central"/>
</dbReference>
<dbReference type="GO" id="GO:0042759">
    <property type="term" value="P:long-chain fatty acid biosynthetic process"/>
    <property type="evidence" value="ECO:0000314"/>
    <property type="project" value="UniProtKB"/>
</dbReference>
<dbReference type="GO" id="GO:0046512">
    <property type="term" value="P:sphingosine biosynthetic process"/>
    <property type="evidence" value="ECO:0000314"/>
    <property type="project" value="UniProtKB"/>
</dbReference>
<dbReference type="GO" id="GO:0051872">
    <property type="term" value="P:sphingosine catabolic process"/>
    <property type="evidence" value="ECO:0000314"/>
    <property type="project" value="PseudoCAP"/>
</dbReference>
<dbReference type="Gene3D" id="2.60.40.2300">
    <property type="entry name" value="Neutral/alkaline non-lysosomal ceramidase, C-terminal domain"/>
    <property type="match status" value="1"/>
</dbReference>
<dbReference type="InterPro" id="IPR006823">
    <property type="entry name" value="Ceramidase_alk"/>
</dbReference>
<dbReference type="InterPro" id="IPR038445">
    <property type="entry name" value="NCDase_C_sf"/>
</dbReference>
<dbReference type="InterPro" id="IPR031331">
    <property type="entry name" value="NEUT/ALK_ceramidase_C"/>
</dbReference>
<dbReference type="InterPro" id="IPR031329">
    <property type="entry name" value="NEUT/ALK_ceramidase_N"/>
</dbReference>
<dbReference type="PANTHER" id="PTHR12670">
    <property type="entry name" value="CERAMIDASE"/>
    <property type="match status" value="1"/>
</dbReference>
<dbReference type="PANTHER" id="PTHR12670:SF1">
    <property type="entry name" value="NEUTRAL CERAMIDASE"/>
    <property type="match status" value="1"/>
</dbReference>
<dbReference type="Pfam" id="PF04734">
    <property type="entry name" value="Ceramidase_alk"/>
    <property type="match status" value="1"/>
</dbReference>
<dbReference type="Pfam" id="PF17048">
    <property type="entry name" value="Ceramidse_alk_C"/>
    <property type="match status" value="1"/>
</dbReference>
<protein>
    <recommendedName>
        <fullName>Neutral ceramidase</fullName>
        <shortName>N-CDase</shortName>
        <shortName>NCDase</shortName>
        <ecNumber>3.5.1.23</ecNumber>
    </recommendedName>
    <alternativeName>
        <fullName>Acylsphingosine deacylase</fullName>
    </alternativeName>
    <alternativeName>
        <fullName>N-acylsphingosine amidohydrolase</fullName>
    </alternativeName>
</protein>
<proteinExistence type="evidence at protein level"/>
<reference key="1">
    <citation type="journal article" date="1999" name="J. Biol. Chem.">
        <title>Molecular cloning, sequencing, and expression of the gene encoding alkaline ceramidase from Pseudomonas aeruginosa. Cloning of a ceramidase homologue from Mycobacterium tuberculosis.</title>
        <authorList>
            <person name="Okino N."/>
            <person name="Ichinose S."/>
            <person name="Omori A."/>
            <person name="Imayama S."/>
            <person name="Nakamura T."/>
            <person name="Ito M."/>
        </authorList>
    </citation>
    <scope>NUCLEOTIDE SEQUENCE [GENOMIC DNA]</scope>
    <scope>PROTEIN SEQUENCE OF 25-48; 546-574; 583-591 AND 653-668</scope>
    <scope>ENZYME ACTIVITY</scope>
</reference>
<reference key="2">
    <citation type="journal article" date="2000" name="Nature">
        <title>Complete genome sequence of Pseudomonas aeruginosa PAO1, an opportunistic pathogen.</title>
        <authorList>
            <person name="Stover C.K."/>
            <person name="Pham X.-Q.T."/>
            <person name="Erwin A.L."/>
            <person name="Mizoguchi S.D."/>
            <person name="Warrener P."/>
            <person name="Hickey M.J."/>
            <person name="Brinkman F.S.L."/>
            <person name="Hufnagle W.O."/>
            <person name="Kowalik D.J."/>
            <person name="Lagrou M."/>
            <person name="Garber R.L."/>
            <person name="Goltry L."/>
            <person name="Tolentino E."/>
            <person name="Westbrock-Wadman S."/>
            <person name="Yuan Y."/>
            <person name="Brody L.L."/>
            <person name="Coulter S.N."/>
            <person name="Folger K.R."/>
            <person name="Kas A."/>
            <person name="Larbig K."/>
            <person name="Lim R.M."/>
            <person name="Smith K.A."/>
            <person name="Spencer D.H."/>
            <person name="Wong G.K.-S."/>
            <person name="Wu Z."/>
            <person name="Paulsen I.T."/>
            <person name="Reizer J."/>
            <person name="Saier M.H. Jr."/>
            <person name="Hancock R.E.W."/>
            <person name="Lory S."/>
            <person name="Olson M.V."/>
        </authorList>
    </citation>
    <scope>NUCLEOTIDE SEQUENCE [LARGE SCALE GENOMIC DNA]</scope>
    <source>
        <strain>ATCC 15692 / DSM 22644 / CIP 104116 / JCM 14847 / LMG 12228 / 1C / PRS 101 / PAO1</strain>
    </source>
</reference>
<reference key="3">
    <citation type="journal article" date="2003" name="Protein Expr. Purif.">
        <title>Molecular cloning and characterization of the alkaline ceramidase from Pseudomonas aeruginosa PA01.</title>
        <authorList>
            <person name="Nieuwenhuizen W.F."/>
            <person name="van Leeuwen S."/>
            <person name="Jack R.W."/>
            <person name="Egmond M.R."/>
            <person name="Goetz F."/>
        </authorList>
    </citation>
    <scope>PROTEIN SEQUENCE OF 26-58</scope>
    <scope>CATALYTIC ACTIVITY</scope>
    <scope>BIOPHYSICOCHEMICAL PROPERTIES</scope>
    <scope>SUBCELLULAR LOCATION</scope>
    <source>
        <strain>ATCC 15692 / DSM 22644 / CIP 104116 / JCM 14847 / LMG 12228 / 1C / PRS 101 / PAO1</strain>
    </source>
</reference>
<reference key="4">
    <citation type="journal article" date="1998" name="J. Biol. Chem.">
        <title>Purification and characterization of a novel ceramidase from Pseudomonas aeruginosa.</title>
        <authorList>
            <person name="Okino N."/>
            <person name="Tani M."/>
            <person name="Imayama S."/>
            <person name="Ito M."/>
        </authorList>
    </citation>
    <scope>FUNCTION</scope>
    <scope>CATALYTIC ACTIVITY</scope>
    <scope>SUBSTRATE SPECIFICITY</scope>
    <scope>COFACTOR</scope>
    <scope>BIOPHYSICOCHEMICAL PROPERTIES</scope>
</reference>
<reference key="5">
    <citation type="journal article" date="2002" name="Biochem. J.">
        <title>Activation of bacterial ceramidase by anionic glycerophospholipids: possible involvement in ceramide hydrolysis on atopic skin by Pseudomonas ceramidase.</title>
        <authorList>
            <person name="Kita K."/>
            <person name="Sueyoshi N."/>
            <person name="Okino N."/>
            <person name="Inagaki M."/>
            <person name="Ishida H."/>
            <person name="Kiso M."/>
            <person name="Imayama S."/>
            <person name="Nakamura T."/>
            <person name="Ito M."/>
        </authorList>
    </citation>
    <scope>ACTIVITY REGULATION</scope>
</reference>
<reference key="6">
    <citation type="journal article" date="2004" name="J. Biol. Chem.">
        <title>Conserved amino acid residues in the COOH-terminal tail are indispensable for the correct folding and localization and enzyme activity of neutral ceramidase.</title>
        <authorList>
            <person name="Tani M."/>
            <person name="Okino N."/>
            <person name="Sueyoshi N."/>
            <person name="Ito M."/>
        </authorList>
    </citation>
    <scope>MUTAGENESIS OF VAL-665</scope>
</reference>
<reference key="7">
    <citation type="journal article" date="2009" name="J. Biol. Chem.">
        <title>Mechanistic insights into the hydrolysis and synthesis of ceramide by neutral ceramidase.</title>
        <authorList>
            <person name="Inoue T."/>
            <person name="Okino N."/>
            <person name="Kakuta Y."/>
            <person name="Hijikata A."/>
            <person name="Okano H."/>
            <person name="Goda H.M."/>
            <person name="Tani M."/>
            <person name="Sueyoshi N."/>
            <person name="Kambayashi K."/>
            <person name="Matsumura H."/>
            <person name="Kai Y."/>
            <person name="Ito M."/>
        </authorList>
    </citation>
    <scope>X-RAY CRYSTALLOGRAPHY (1.4 ANGSTROMS) OF 25-670 COMPLEX WITH SUBSTRATE ANALOGS AND DIVALENT CATIONS</scope>
    <scope>FUNCTION</scope>
    <scope>MUTAGENESIS OF HIS-121; HIS-123; ARG-184; GLU-435; TYR-472 AND TYR-484</scope>
    <scope>REACTION MECHANISM</scope>
    <scope>COFACTOR</scope>
    <scope>SUBUNIT</scope>
</reference>
<keyword id="KW-0002">3D-structure</keyword>
<keyword id="KW-0903">Direct protein sequencing</keyword>
<keyword id="KW-1015">Disulfide bond</keyword>
<keyword id="KW-0378">Hydrolase</keyword>
<keyword id="KW-0443">Lipid metabolism</keyword>
<keyword id="KW-0460">Magnesium</keyword>
<keyword id="KW-0479">Metal-binding</keyword>
<keyword id="KW-1185">Reference proteome</keyword>
<keyword id="KW-0964">Secreted</keyword>
<keyword id="KW-0732">Signal</keyword>
<keyword id="KW-0862">Zinc</keyword>
<organism>
    <name type="scientific">Pseudomonas aeruginosa (strain ATCC 15692 / DSM 22644 / CIP 104116 / JCM 14847 / LMG 12228 / 1C / PRS 101 / PAO1)</name>
    <dbReference type="NCBI Taxonomy" id="208964"/>
    <lineage>
        <taxon>Bacteria</taxon>
        <taxon>Pseudomonadati</taxon>
        <taxon>Pseudomonadota</taxon>
        <taxon>Gammaproteobacteria</taxon>
        <taxon>Pseudomonadales</taxon>
        <taxon>Pseudomonadaceae</taxon>
        <taxon>Pseudomonas</taxon>
    </lineage>
</organism>